<organism>
    <name type="scientific">Methanocorpusculum labreanum (strain ATCC 43576 / DSM 4855 / Z)</name>
    <dbReference type="NCBI Taxonomy" id="410358"/>
    <lineage>
        <taxon>Archaea</taxon>
        <taxon>Methanobacteriati</taxon>
        <taxon>Methanobacteriota</taxon>
        <taxon>Stenosarchaea group</taxon>
        <taxon>Methanomicrobia</taxon>
        <taxon>Methanomicrobiales</taxon>
        <taxon>Methanocorpusculaceae</taxon>
        <taxon>Methanocorpusculum</taxon>
    </lineage>
</organism>
<name>NDK_METLZ</name>
<reference key="1">
    <citation type="journal article" date="2009" name="Stand. Genomic Sci.">
        <title>Complete genome sequence of Methanocorpusculum labreanum type strain Z.</title>
        <authorList>
            <person name="Anderson I.J."/>
            <person name="Sieprawska-Lupa M."/>
            <person name="Goltsman E."/>
            <person name="Lapidus A."/>
            <person name="Copeland A."/>
            <person name="Glavina Del Rio T."/>
            <person name="Tice H."/>
            <person name="Dalin E."/>
            <person name="Barry K."/>
            <person name="Pitluck S."/>
            <person name="Hauser L."/>
            <person name="Land M."/>
            <person name="Lucas S."/>
            <person name="Richardson P."/>
            <person name="Whitman W.B."/>
            <person name="Kyrpides N.C."/>
        </authorList>
    </citation>
    <scope>NUCLEOTIDE SEQUENCE [LARGE SCALE GENOMIC DNA]</scope>
    <source>
        <strain>ATCC 43576 / DSM 4855 / Z</strain>
    </source>
</reference>
<feature type="chain" id="PRO_1000026250" description="Nucleoside diphosphate kinase">
    <location>
        <begin position="1"/>
        <end position="149"/>
    </location>
</feature>
<feature type="active site" description="Pros-phosphohistidine intermediate" evidence="1">
    <location>
        <position position="115"/>
    </location>
</feature>
<feature type="binding site" evidence="1">
    <location>
        <position position="9"/>
    </location>
    <ligand>
        <name>ATP</name>
        <dbReference type="ChEBI" id="CHEBI:30616"/>
    </ligand>
</feature>
<feature type="binding site" evidence="1">
    <location>
        <position position="57"/>
    </location>
    <ligand>
        <name>ATP</name>
        <dbReference type="ChEBI" id="CHEBI:30616"/>
    </ligand>
</feature>
<feature type="binding site" evidence="1">
    <location>
        <position position="85"/>
    </location>
    <ligand>
        <name>ATP</name>
        <dbReference type="ChEBI" id="CHEBI:30616"/>
    </ligand>
</feature>
<feature type="binding site" evidence="1">
    <location>
        <position position="91"/>
    </location>
    <ligand>
        <name>ATP</name>
        <dbReference type="ChEBI" id="CHEBI:30616"/>
    </ligand>
</feature>
<feature type="binding site" evidence="1">
    <location>
        <position position="102"/>
    </location>
    <ligand>
        <name>ATP</name>
        <dbReference type="ChEBI" id="CHEBI:30616"/>
    </ligand>
</feature>
<feature type="binding site" evidence="1">
    <location>
        <position position="112"/>
    </location>
    <ligand>
        <name>ATP</name>
        <dbReference type="ChEBI" id="CHEBI:30616"/>
    </ligand>
</feature>
<sequence length="149" mass="16378">MERTFVMIKPDGVQRGLVGEILSRFENKGFKIVAGKFGVLAESIVDKHYEEHLAKPFYPGMKAYITSGPVFRFVLEGDNVVATVRKMNGATNPTEANPGTIRGDYALSIGKNVIHAADSPESAAREIGIHFTPAELVSYTKIDESELYE</sequence>
<comment type="function">
    <text evidence="1">Major role in the synthesis of nucleoside triphosphates other than ATP. The ATP gamma phosphate is transferred to the NDP beta phosphate via a ping-pong mechanism, using a phosphorylated active-site intermediate.</text>
</comment>
<comment type="catalytic activity">
    <reaction evidence="1">
        <text>a 2'-deoxyribonucleoside 5'-diphosphate + ATP = a 2'-deoxyribonucleoside 5'-triphosphate + ADP</text>
        <dbReference type="Rhea" id="RHEA:44640"/>
        <dbReference type="ChEBI" id="CHEBI:30616"/>
        <dbReference type="ChEBI" id="CHEBI:61560"/>
        <dbReference type="ChEBI" id="CHEBI:73316"/>
        <dbReference type="ChEBI" id="CHEBI:456216"/>
        <dbReference type="EC" id="2.7.4.6"/>
    </reaction>
</comment>
<comment type="catalytic activity">
    <reaction evidence="1">
        <text>a ribonucleoside 5'-diphosphate + ATP = a ribonucleoside 5'-triphosphate + ADP</text>
        <dbReference type="Rhea" id="RHEA:18113"/>
        <dbReference type="ChEBI" id="CHEBI:30616"/>
        <dbReference type="ChEBI" id="CHEBI:57930"/>
        <dbReference type="ChEBI" id="CHEBI:61557"/>
        <dbReference type="ChEBI" id="CHEBI:456216"/>
        <dbReference type="EC" id="2.7.4.6"/>
    </reaction>
</comment>
<comment type="cofactor">
    <cofactor evidence="1">
        <name>Mg(2+)</name>
        <dbReference type="ChEBI" id="CHEBI:18420"/>
    </cofactor>
</comment>
<comment type="subcellular location">
    <subcellularLocation>
        <location evidence="1">Cytoplasm</location>
    </subcellularLocation>
</comment>
<comment type="similarity">
    <text evidence="1">Belongs to the NDK family.</text>
</comment>
<accession>A2STK8</accession>
<evidence type="ECO:0000255" key="1">
    <source>
        <dbReference type="HAMAP-Rule" id="MF_00451"/>
    </source>
</evidence>
<dbReference type="EC" id="2.7.4.6" evidence="1"/>
<dbReference type="EMBL" id="CP000559">
    <property type="protein sequence ID" value="ABN07664.1"/>
    <property type="molecule type" value="Genomic_DNA"/>
</dbReference>
<dbReference type="RefSeq" id="WP_011833867.1">
    <property type="nucleotide sequence ID" value="NC_008942.1"/>
</dbReference>
<dbReference type="SMR" id="A2STK8"/>
<dbReference type="STRING" id="410358.Mlab_1500"/>
<dbReference type="GeneID" id="4794780"/>
<dbReference type="KEGG" id="mla:Mlab_1500"/>
<dbReference type="eggNOG" id="arCOG04313">
    <property type="taxonomic scope" value="Archaea"/>
</dbReference>
<dbReference type="HOGENOM" id="CLU_060216_6_3_2"/>
<dbReference type="OrthoDB" id="6874at2157"/>
<dbReference type="Proteomes" id="UP000000365">
    <property type="component" value="Chromosome"/>
</dbReference>
<dbReference type="GO" id="GO:0005737">
    <property type="term" value="C:cytoplasm"/>
    <property type="evidence" value="ECO:0007669"/>
    <property type="project" value="UniProtKB-SubCell"/>
</dbReference>
<dbReference type="GO" id="GO:0005524">
    <property type="term" value="F:ATP binding"/>
    <property type="evidence" value="ECO:0007669"/>
    <property type="project" value="UniProtKB-UniRule"/>
</dbReference>
<dbReference type="GO" id="GO:0046872">
    <property type="term" value="F:metal ion binding"/>
    <property type="evidence" value="ECO:0007669"/>
    <property type="project" value="UniProtKB-KW"/>
</dbReference>
<dbReference type="GO" id="GO:0004550">
    <property type="term" value="F:nucleoside diphosphate kinase activity"/>
    <property type="evidence" value="ECO:0007669"/>
    <property type="project" value="UniProtKB-UniRule"/>
</dbReference>
<dbReference type="GO" id="GO:0006241">
    <property type="term" value="P:CTP biosynthetic process"/>
    <property type="evidence" value="ECO:0007669"/>
    <property type="project" value="UniProtKB-UniRule"/>
</dbReference>
<dbReference type="GO" id="GO:0006183">
    <property type="term" value="P:GTP biosynthetic process"/>
    <property type="evidence" value="ECO:0007669"/>
    <property type="project" value="UniProtKB-UniRule"/>
</dbReference>
<dbReference type="GO" id="GO:0006228">
    <property type="term" value="P:UTP biosynthetic process"/>
    <property type="evidence" value="ECO:0007669"/>
    <property type="project" value="UniProtKB-UniRule"/>
</dbReference>
<dbReference type="CDD" id="cd04413">
    <property type="entry name" value="NDPk_I"/>
    <property type="match status" value="1"/>
</dbReference>
<dbReference type="FunFam" id="3.30.70.141:FF:000002">
    <property type="entry name" value="Nucleoside diphosphate kinase"/>
    <property type="match status" value="1"/>
</dbReference>
<dbReference type="Gene3D" id="3.30.70.141">
    <property type="entry name" value="Nucleoside diphosphate kinase-like domain"/>
    <property type="match status" value="1"/>
</dbReference>
<dbReference type="HAMAP" id="MF_00451">
    <property type="entry name" value="NDP_kinase"/>
    <property type="match status" value="1"/>
</dbReference>
<dbReference type="InterPro" id="IPR034907">
    <property type="entry name" value="NDK-like_dom"/>
</dbReference>
<dbReference type="InterPro" id="IPR036850">
    <property type="entry name" value="NDK-like_dom_sf"/>
</dbReference>
<dbReference type="InterPro" id="IPR001564">
    <property type="entry name" value="Nucleoside_diP_kinase"/>
</dbReference>
<dbReference type="NCBIfam" id="NF001908">
    <property type="entry name" value="PRK00668.1"/>
    <property type="match status" value="1"/>
</dbReference>
<dbReference type="PANTHER" id="PTHR11349">
    <property type="entry name" value="NUCLEOSIDE DIPHOSPHATE KINASE"/>
    <property type="match status" value="1"/>
</dbReference>
<dbReference type="Pfam" id="PF00334">
    <property type="entry name" value="NDK"/>
    <property type="match status" value="1"/>
</dbReference>
<dbReference type="PRINTS" id="PR01243">
    <property type="entry name" value="NUCDPKINASE"/>
</dbReference>
<dbReference type="SMART" id="SM00562">
    <property type="entry name" value="NDK"/>
    <property type="match status" value="1"/>
</dbReference>
<dbReference type="SUPFAM" id="SSF54919">
    <property type="entry name" value="Nucleoside diphosphate kinase, NDK"/>
    <property type="match status" value="1"/>
</dbReference>
<dbReference type="PROSITE" id="PS51374">
    <property type="entry name" value="NDPK_LIKE"/>
    <property type="match status" value="1"/>
</dbReference>
<protein>
    <recommendedName>
        <fullName evidence="1">Nucleoside diphosphate kinase</fullName>
        <shortName evidence="1">NDK</shortName>
        <shortName evidence="1">NDP kinase</shortName>
        <ecNumber evidence="1">2.7.4.6</ecNumber>
    </recommendedName>
    <alternativeName>
        <fullName evidence="1">Nucleoside-2-P kinase</fullName>
    </alternativeName>
</protein>
<gene>
    <name evidence="1" type="primary">ndk</name>
    <name type="ordered locus">Mlab_1500</name>
</gene>
<proteinExistence type="inferred from homology"/>
<keyword id="KW-0067">ATP-binding</keyword>
<keyword id="KW-0963">Cytoplasm</keyword>
<keyword id="KW-0418">Kinase</keyword>
<keyword id="KW-0460">Magnesium</keyword>
<keyword id="KW-0479">Metal-binding</keyword>
<keyword id="KW-0546">Nucleotide metabolism</keyword>
<keyword id="KW-0547">Nucleotide-binding</keyword>
<keyword id="KW-0597">Phosphoprotein</keyword>
<keyword id="KW-1185">Reference proteome</keyword>
<keyword id="KW-0808">Transferase</keyword>